<gene>
    <name evidence="1" type="primary">cca</name>
    <name type="ordered locus">LAF_0885</name>
</gene>
<name>CCA_LIMF3</name>
<organism>
    <name type="scientific">Limosilactobacillus fermentum (strain NBRC 3956 / LMG 18251)</name>
    <name type="common">Lactobacillus fermentum</name>
    <dbReference type="NCBI Taxonomy" id="334390"/>
    <lineage>
        <taxon>Bacteria</taxon>
        <taxon>Bacillati</taxon>
        <taxon>Bacillota</taxon>
        <taxon>Bacilli</taxon>
        <taxon>Lactobacillales</taxon>
        <taxon>Lactobacillaceae</taxon>
        <taxon>Limosilactobacillus</taxon>
    </lineage>
</organism>
<reference key="1">
    <citation type="journal article" date="2008" name="DNA Res.">
        <title>Comparative genome analysis of Lactobacillus reuteri and Lactobacillus fermentum reveal a genomic island for reuterin and cobalamin production.</title>
        <authorList>
            <person name="Morita H."/>
            <person name="Toh H."/>
            <person name="Fukuda S."/>
            <person name="Horikawa H."/>
            <person name="Oshima K."/>
            <person name="Suzuki T."/>
            <person name="Murakami M."/>
            <person name="Hisamatsu S."/>
            <person name="Kato Y."/>
            <person name="Takizawa T."/>
            <person name="Fukuoka H."/>
            <person name="Yoshimura T."/>
            <person name="Itoh K."/>
            <person name="O'Sullivan D.J."/>
            <person name="McKay L.L."/>
            <person name="Ohno H."/>
            <person name="Kikuchi J."/>
            <person name="Masaoka T."/>
            <person name="Hattori M."/>
        </authorList>
    </citation>
    <scope>NUCLEOTIDE SEQUENCE [LARGE SCALE GENOMIC DNA]</scope>
    <source>
        <strain>NBRC 3956 / LMG 18251</strain>
    </source>
</reference>
<keyword id="KW-0067">ATP-binding</keyword>
<keyword id="KW-0460">Magnesium</keyword>
<keyword id="KW-0479">Metal-binding</keyword>
<keyword id="KW-0547">Nucleotide-binding</keyword>
<keyword id="KW-0548">Nucleotidyltransferase</keyword>
<keyword id="KW-1185">Reference proteome</keyword>
<keyword id="KW-0692">RNA repair</keyword>
<keyword id="KW-0694">RNA-binding</keyword>
<keyword id="KW-0808">Transferase</keyword>
<keyword id="KW-0819">tRNA processing</keyword>
<dbReference type="EC" id="2.7.7.72" evidence="1"/>
<dbReference type="EMBL" id="AP008937">
    <property type="protein sequence ID" value="BAG27221.1"/>
    <property type="molecule type" value="Genomic_DNA"/>
</dbReference>
<dbReference type="RefSeq" id="WP_012391197.1">
    <property type="nucleotide sequence ID" value="NC_010610.1"/>
</dbReference>
<dbReference type="SMR" id="B2GC39"/>
<dbReference type="KEGG" id="lfe:LAF_0885"/>
<dbReference type="eggNOG" id="COG0617">
    <property type="taxonomic scope" value="Bacteria"/>
</dbReference>
<dbReference type="HOGENOM" id="CLU_015961_3_0_9"/>
<dbReference type="Proteomes" id="UP000001697">
    <property type="component" value="Chromosome"/>
</dbReference>
<dbReference type="GO" id="GO:0005524">
    <property type="term" value="F:ATP binding"/>
    <property type="evidence" value="ECO:0007669"/>
    <property type="project" value="UniProtKB-UniRule"/>
</dbReference>
<dbReference type="GO" id="GO:0004810">
    <property type="term" value="F:CCA tRNA nucleotidyltransferase activity"/>
    <property type="evidence" value="ECO:0007669"/>
    <property type="project" value="UniProtKB-UniRule"/>
</dbReference>
<dbReference type="GO" id="GO:0000287">
    <property type="term" value="F:magnesium ion binding"/>
    <property type="evidence" value="ECO:0007669"/>
    <property type="project" value="UniProtKB-UniRule"/>
</dbReference>
<dbReference type="GO" id="GO:0000049">
    <property type="term" value="F:tRNA binding"/>
    <property type="evidence" value="ECO:0007669"/>
    <property type="project" value="UniProtKB-UniRule"/>
</dbReference>
<dbReference type="GO" id="GO:0042245">
    <property type="term" value="P:RNA repair"/>
    <property type="evidence" value="ECO:0007669"/>
    <property type="project" value="UniProtKB-KW"/>
</dbReference>
<dbReference type="GO" id="GO:0001680">
    <property type="term" value="P:tRNA 3'-terminal CCA addition"/>
    <property type="evidence" value="ECO:0007669"/>
    <property type="project" value="UniProtKB-UniRule"/>
</dbReference>
<dbReference type="CDD" id="cd05398">
    <property type="entry name" value="NT_ClassII-CCAase"/>
    <property type="match status" value="1"/>
</dbReference>
<dbReference type="Gene3D" id="1.10.246.80">
    <property type="match status" value="1"/>
</dbReference>
<dbReference type="Gene3D" id="1.20.58.560">
    <property type="match status" value="1"/>
</dbReference>
<dbReference type="Gene3D" id="3.30.460.10">
    <property type="entry name" value="Beta Polymerase, domain 2"/>
    <property type="match status" value="1"/>
</dbReference>
<dbReference type="Gene3D" id="1.10.3090.10">
    <property type="entry name" value="cca-adding enzyme, domain 2"/>
    <property type="match status" value="1"/>
</dbReference>
<dbReference type="HAMAP" id="MF_01263">
    <property type="entry name" value="CCA_bact_type3"/>
    <property type="match status" value="1"/>
</dbReference>
<dbReference type="InterPro" id="IPR050264">
    <property type="entry name" value="Bact_CCA-adding_enz_type3_sf"/>
</dbReference>
<dbReference type="InterPro" id="IPR032810">
    <property type="entry name" value="CCA-adding_enz_C"/>
</dbReference>
<dbReference type="InterPro" id="IPR023068">
    <property type="entry name" value="CCA-adding_enz_firmicutes"/>
</dbReference>
<dbReference type="InterPro" id="IPR043519">
    <property type="entry name" value="NT_sf"/>
</dbReference>
<dbReference type="InterPro" id="IPR002646">
    <property type="entry name" value="PolA_pol_head_dom"/>
</dbReference>
<dbReference type="InterPro" id="IPR032828">
    <property type="entry name" value="PolyA_RNA-bd"/>
</dbReference>
<dbReference type="NCBIfam" id="NF009814">
    <property type="entry name" value="PRK13299.1"/>
    <property type="match status" value="1"/>
</dbReference>
<dbReference type="PANTHER" id="PTHR46173">
    <property type="entry name" value="CCA TRNA NUCLEOTIDYLTRANSFERASE 1, MITOCHONDRIAL"/>
    <property type="match status" value="1"/>
</dbReference>
<dbReference type="PANTHER" id="PTHR46173:SF1">
    <property type="entry name" value="CCA TRNA NUCLEOTIDYLTRANSFERASE 1, MITOCHONDRIAL"/>
    <property type="match status" value="1"/>
</dbReference>
<dbReference type="Pfam" id="PF01743">
    <property type="entry name" value="PolyA_pol"/>
    <property type="match status" value="1"/>
</dbReference>
<dbReference type="Pfam" id="PF12627">
    <property type="entry name" value="PolyA_pol_RNAbd"/>
    <property type="match status" value="1"/>
</dbReference>
<dbReference type="Pfam" id="PF13735">
    <property type="entry name" value="tRNA_NucTran2_2"/>
    <property type="match status" value="1"/>
</dbReference>
<dbReference type="SUPFAM" id="SSF81301">
    <property type="entry name" value="Nucleotidyltransferase"/>
    <property type="match status" value="1"/>
</dbReference>
<dbReference type="SUPFAM" id="SSF81891">
    <property type="entry name" value="Poly A polymerase C-terminal region-like"/>
    <property type="match status" value="1"/>
</dbReference>
<comment type="function">
    <text evidence="1">Catalyzes the addition and repair of the essential 3'-terminal CCA sequence in tRNAs without using a nucleic acid template. Adds these three nucleotides in the order of C, C, and A to the tRNA nucleotide-73, using CTP and ATP as substrates and producing inorganic pyrophosphate. tRNA 3'-terminal CCA addition is required both for tRNA processing and repair. Also involved in tRNA surveillance by mediating tandem CCA addition to generate a CCACCA at the 3' terminus of unstable tRNAs. While stable tRNAs receive only 3'-terminal CCA, unstable tRNAs are marked with CCACCA and rapidly degraded.</text>
</comment>
<comment type="catalytic activity">
    <reaction evidence="1">
        <text>a tRNA precursor + 2 CTP + ATP = a tRNA with a 3' CCA end + 3 diphosphate</text>
        <dbReference type="Rhea" id="RHEA:14433"/>
        <dbReference type="Rhea" id="RHEA-COMP:10465"/>
        <dbReference type="Rhea" id="RHEA-COMP:10468"/>
        <dbReference type="ChEBI" id="CHEBI:30616"/>
        <dbReference type="ChEBI" id="CHEBI:33019"/>
        <dbReference type="ChEBI" id="CHEBI:37563"/>
        <dbReference type="ChEBI" id="CHEBI:74896"/>
        <dbReference type="ChEBI" id="CHEBI:83071"/>
        <dbReference type="EC" id="2.7.7.72"/>
    </reaction>
</comment>
<comment type="catalytic activity">
    <reaction evidence="1">
        <text>a tRNA with a 3' CCA end + 2 CTP + ATP = a tRNA with a 3' CCACCA end + 3 diphosphate</text>
        <dbReference type="Rhea" id="RHEA:76235"/>
        <dbReference type="Rhea" id="RHEA-COMP:10468"/>
        <dbReference type="Rhea" id="RHEA-COMP:18655"/>
        <dbReference type="ChEBI" id="CHEBI:30616"/>
        <dbReference type="ChEBI" id="CHEBI:33019"/>
        <dbReference type="ChEBI" id="CHEBI:37563"/>
        <dbReference type="ChEBI" id="CHEBI:83071"/>
        <dbReference type="ChEBI" id="CHEBI:195187"/>
    </reaction>
    <physiologicalReaction direction="left-to-right" evidence="1">
        <dbReference type="Rhea" id="RHEA:76236"/>
    </physiologicalReaction>
</comment>
<comment type="cofactor">
    <cofactor evidence="1">
        <name>Mg(2+)</name>
        <dbReference type="ChEBI" id="CHEBI:18420"/>
    </cofactor>
</comment>
<comment type="subunit">
    <text evidence="1">Homodimer.</text>
</comment>
<comment type="miscellaneous">
    <text evidence="1">A single active site specifically recognizes both ATP and CTP and is responsible for their addition.</text>
</comment>
<comment type="similarity">
    <text evidence="1">Belongs to the tRNA nucleotidyltransferase/poly(A) polymerase family. Bacterial CCA-adding enzyme type 3 subfamily.</text>
</comment>
<accession>B2GC39</accession>
<sequence length="400" mass="43182">MKIETLPAEFEPARPILSRIEEAGFEAYFVGGCVRDTILNLPIHDIDIATSAYPAEIKQIFSRTVDTGIEHGTVMILDHGTGYETTTFRTESGYQDFRRPDSVTFVRSLKEDLQRRDFTINALALKEDGTVVDLFDGLGDLKRHLIKAVGDPAERFHEDALRMMRAARFAAKLGFQIEPGTLAGMSQNAALLEKIAVERIQVEFEKLLLGKAVQNGLAAMLDTKLYLHCPGLKEGGQGLQYLAQQPLTLNNATQAWGALAICLGLDKNQLRPFLKGWKLSNGLITAVSRAVPLVEKLTTKTAGASDLYQAGQQAVADAVVIANSLGGQVDPQAVQAAYQALPIKESGELALNGGDLIKAGVKPGPAMGKALTTLTKQVVEGQLANDYQTLLKAAGELLKA</sequence>
<evidence type="ECO:0000255" key="1">
    <source>
        <dbReference type="HAMAP-Rule" id="MF_01263"/>
    </source>
</evidence>
<proteinExistence type="inferred from homology"/>
<protein>
    <recommendedName>
        <fullName evidence="1">CCA-adding enzyme</fullName>
        <ecNumber evidence="1">2.7.7.72</ecNumber>
    </recommendedName>
    <alternativeName>
        <fullName evidence="1">CCA tRNA nucleotidyltransferase</fullName>
    </alternativeName>
    <alternativeName>
        <fullName evidence="1">tRNA CCA-pyrophosphorylase</fullName>
    </alternativeName>
    <alternativeName>
        <fullName evidence="1">tRNA adenylyl-/cytidylyl- transferase</fullName>
    </alternativeName>
    <alternativeName>
        <fullName evidence="1">tRNA nucleotidyltransferase</fullName>
    </alternativeName>
    <alternativeName>
        <fullName evidence="1">tRNA-NT</fullName>
    </alternativeName>
</protein>
<feature type="chain" id="PRO_1000140074" description="CCA-adding enzyme">
    <location>
        <begin position="1"/>
        <end position="400"/>
    </location>
</feature>
<feature type="binding site" evidence="1">
    <location>
        <position position="32"/>
    </location>
    <ligand>
        <name>ATP</name>
        <dbReference type="ChEBI" id="CHEBI:30616"/>
    </ligand>
</feature>
<feature type="binding site" evidence="1">
    <location>
        <position position="32"/>
    </location>
    <ligand>
        <name>CTP</name>
        <dbReference type="ChEBI" id="CHEBI:37563"/>
    </ligand>
</feature>
<feature type="binding site" evidence="1">
    <location>
        <position position="35"/>
    </location>
    <ligand>
        <name>ATP</name>
        <dbReference type="ChEBI" id="CHEBI:30616"/>
    </ligand>
</feature>
<feature type="binding site" evidence="1">
    <location>
        <position position="35"/>
    </location>
    <ligand>
        <name>CTP</name>
        <dbReference type="ChEBI" id="CHEBI:37563"/>
    </ligand>
</feature>
<feature type="binding site" evidence="1">
    <location>
        <position position="45"/>
    </location>
    <ligand>
        <name>Mg(2+)</name>
        <dbReference type="ChEBI" id="CHEBI:18420"/>
    </ligand>
</feature>
<feature type="binding site" evidence="1">
    <location>
        <position position="47"/>
    </location>
    <ligand>
        <name>Mg(2+)</name>
        <dbReference type="ChEBI" id="CHEBI:18420"/>
    </ligand>
</feature>
<feature type="binding site" evidence="1">
    <location>
        <position position="116"/>
    </location>
    <ligand>
        <name>ATP</name>
        <dbReference type="ChEBI" id="CHEBI:30616"/>
    </ligand>
</feature>
<feature type="binding site" evidence="1">
    <location>
        <position position="116"/>
    </location>
    <ligand>
        <name>CTP</name>
        <dbReference type="ChEBI" id="CHEBI:37563"/>
    </ligand>
</feature>
<feature type="binding site" evidence="1">
    <location>
        <position position="159"/>
    </location>
    <ligand>
        <name>ATP</name>
        <dbReference type="ChEBI" id="CHEBI:30616"/>
    </ligand>
</feature>
<feature type="binding site" evidence="1">
    <location>
        <position position="159"/>
    </location>
    <ligand>
        <name>CTP</name>
        <dbReference type="ChEBI" id="CHEBI:37563"/>
    </ligand>
</feature>
<feature type="binding site" evidence="1">
    <location>
        <position position="162"/>
    </location>
    <ligand>
        <name>ATP</name>
        <dbReference type="ChEBI" id="CHEBI:30616"/>
    </ligand>
</feature>
<feature type="binding site" evidence="1">
    <location>
        <position position="162"/>
    </location>
    <ligand>
        <name>CTP</name>
        <dbReference type="ChEBI" id="CHEBI:37563"/>
    </ligand>
</feature>
<feature type="binding site" evidence="1">
    <location>
        <position position="165"/>
    </location>
    <ligand>
        <name>ATP</name>
        <dbReference type="ChEBI" id="CHEBI:30616"/>
    </ligand>
</feature>
<feature type="binding site" evidence="1">
    <location>
        <position position="165"/>
    </location>
    <ligand>
        <name>CTP</name>
        <dbReference type="ChEBI" id="CHEBI:37563"/>
    </ligand>
</feature>
<feature type="binding site" evidence="1">
    <location>
        <position position="168"/>
    </location>
    <ligand>
        <name>ATP</name>
        <dbReference type="ChEBI" id="CHEBI:30616"/>
    </ligand>
</feature>
<feature type="binding site" evidence="1">
    <location>
        <position position="168"/>
    </location>
    <ligand>
        <name>CTP</name>
        <dbReference type="ChEBI" id="CHEBI:37563"/>
    </ligand>
</feature>